<comment type="catalytic activity">
    <reaction>
        <text>1-(2-carboxyphenylamino)-1-deoxy-D-ribulose 5-phosphate + H(+) = (1S,2R)-1-C-(indol-3-yl)glycerol 3-phosphate + CO2 + H2O</text>
        <dbReference type="Rhea" id="RHEA:23476"/>
        <dbReference type="ChEBI" id="CHEBI:15377"/>
        <dbReference type="ChEBI" id="CHEBI:15378"/>
        <dbReference type="ChEBI" id="CHEBI:16526"/>
        <dbReference type="ChEBI" id="CHEBI:58613"/>
        <dbReference type="ChEBI" id="CHEBI:58866"/>
        <dbReference type="EC" id="4.1.1.48"/>
    </reaction>
</comment>
<comment type="pathway">
    <text>Amino-acid biosynthesis; L-tryptophan biosynthesis; L-tryptophan from chorismate: step 4/5.</text>
</comment>
<comment type="similarity">
    <text evidence="1">Belongs to the TrpC family.</text>
</comment>
<organism>
    <name type="scientific">Methanocaldococcus jannaschii (strain ATCC 43067 / DSM 2661 / JAL-1 / JCM 10045 / NBRC 100440)</name>
    <name type="common">Methanococcus jannaschii</name>
    <dbReference type="NCBI Taxonomy" id="243232"/>
    <lineage>
        <taxon>Archaea</taxon>
        <taxon>Methanobacteriati</taxon>
        <taxon>Methanobacteriota</taxon>
        <taxon>Methanomada group</taxon>
        <taxon>Methanococci</taxon>
        <taxon>Methanococcales</taxon>
        <taxon>Methanocaldococcaceae</taxon>
        <taxon>Methanocaldococcus</taxon>
    </lineage>
</organism>
<gene>
    <name type="primary">trpC</name>
    <name type="ordered locus">MJ0918</name>
</gene>
<reference key="1">
    <citation type="journal article" date="1996" name="Science">
        <title>Complete genome sequence of the methanogenic archaeon, Methanococcus jannaschii.</title>
        <authorList>
            <person name="Bult C.J."/>
            <person name="White O."/>
            <person name="Olsen G.J."/>
            <person name="Zhou L."/>
            <person name="Fleischmann R.D."/>
            <person name="Sutton G.G."/>
            <person name="Blake J.A."/>
            <person name="FitzGerald L.M."/>
            <person name="Clayton R.A."/>
            <person name="Gocayne J.D."/>
            <person name="Kerlavage A.R."/>
            <person name="Dougherty B.A."/>
            <person name="Tomb J.-F."/>
            <person name="Adams M.D."/>
            <person name="Reich C.I."/>
            <person name="Overbeek R."/>
            <person name="Kirkness E.F."/>
            <person name="Weinstock K.G."/>
            <person name="Merrick J.M."/>
            <person name="Glodek A."/>
            <person name="Scott J.L."/>
            <person name="Geoghagen N.S.M."/>
            <person name="Weidman J.F."/>
            <person name="Fuhrmann J.L."/>
            <person name="Nguyen D."/>
            <person name="Utterback T.R."/>
            <person name="Kelley J.M."/>
            <person name="Peterson J.D."/>
            <person name="Sadow P.W."/>
            <person name="Hanna M.C."/>
            <person name="Cotton M.D."/>
            <person name="Roberts K.M."/>
            <person name="Hurst M.A."/>
            <person name="Kaine B.P."/>
            <person name="Borodovsky M."/>
            <person name="Klenk H.-P."/>
            <person name="Fraser C.M."/>
            <person name="Smith H.O."/>
            <person name="Woese C.R."/>
            <person name="Venter J.C."/>
        </authorList>
    </citation>
    <scope>NUCLEOTIDE SEQUENCE [LARGE SCALE GENOMIC DNA]</scope>
    <source>
        <strain>ATCC 43067 / DSM 2661 / JAL-1 / JCM 10045 / NBRC 100440</strain>
    </source>
</reference>
<evidence type="ECO:0000305" key="1"/>
<dbReference type="EC" id="4.1.1.48"/>
<dbReference type="EMBL" id="L77117">
    <property type="protein sequence ID" value="AAB98923.1"/>
    <property type="molecule type" value="Genomic_DNA"/>
</dbReference>
<dbReference type="PIR" id="F64414">
    <property type="entry name" value="F64414"/>
</dbReference>
<dbReference type="RefSeq" id="WP_010870432.1">
    <property type="nucleotide sequence ID" value="NC_000909.1"/>
</dbReference>
<dbReference type="SMR" id="Q58328"/>
<dbReference type="FunCoup" id="Q58328">
    <property type="interactions" value="137"/>
</dbReference>
<dbReference type="STRING" id="243232.MJ_0918"/>
<dbReference type="PaxDb" id="243232-MJ_0918"/>
<dbReference type="EnsemblBacteria" id="AAB98923">
    <property type="protein sequence ID" value="AAB98923"/>
    <property type="gene ID" value="MJ_0918"/>
</dbReference>
<dbReference type="GeneID" id="1451807"/>
<dbReference type="KEGG" id="mja:MJ_0918"/>
<dbReference type="eggNOG" id="arCOG01088">
    <property type="taxonomic scope" value="Archaea"/>
</dbReference>
<dbReference type="HOGENOM" id="CLU_034247_2_0_2"/>
<dbReference type="InParanoid" id="Q58328"/>
<dbReference type="OrthoDB" id="15223at2157"/>
<dbReference type="PhylomeDB" id="Q58328"/>
<dbReference type="UniPathway" id="UPA00035">
    <property type="reaction ID" value="UER00043"/>
</dbReference>
<dbReference type="Proteomes" id="UP000000805">
    <property type="component" value="Chromosome"/>
</dbReference>
<dbReference type="GO" id="GO:0004425">
    <property type="term" value="F:indole-3-glycerol-phosphate synthase activity"/>
    <property type="evidence" value="ECO:0000318"/>
    <property type="project" value="GO_Central"/>
</dbReference>
<dbReference type="GO" id="GO:0004640">
    <property type="term" value="F:phosphoribosylanthranilate isomerase activity"/>
    <property type="evidence" value="ECO:0000318"/>
    <property type="project" value="GO_Central"/>
</dbReference>
<dbReference type="GO" id="GO:0000162">
    <property type="term" value="P:L-tryptophan biosynthetic process"/>
    <property type="evidence" value="ECO:0000318"/>
    <property type="project" value="GO_Central"/>
</dbReference>
<dbReference type="CDD" id="cd00331">
    <property type="entry name" value="IGPS"/>
    <property type="match status" value="1"/>
</dbReference>
<dbReference type="FunFam" id="3.20.20.70:FF:000024">
    <property type="entry name" value="Indole-3-glycerol phosphate synthase"/>
    <property type="match status" value="1"/>
</dbReference>
<dbReference type="Gene3D" id="3.20.20.70">
    <property type="entry name" value="Aldolase class I"/>
    <property type="match status" value="1"/>
</dbReference>
<dbReference type="HAMAP" id="MF_00134_A">
    <property type="entry name" value="IGPS_A"/>
    <property type="match status" value="1"/>
</dbReference>
<dbReference type="InterPro" id="IPR013785">
    <property type="entry name" value="Aldolase_TIM"/>
</dbReference>
<dbReference type="InterPro" id="IPR045186">
    <property type="entry name" value="Indole-3-glycerol_P_synth"/>
</dbReference>
<dbReference type="InterPro" id="IPR013798">
    <property type="entry name" value="Indole-3-glycerol_P_synth_dom"/>
</dbReference>
<dbReference type="InterPro" id="IPR001468">
    <property type="entry name" value="Indole-3-GlycerolPSynthase_CS"/>
</dbReference>
<dbReference type="InterPro" id="IPR011060">
    <property type="entry name" value="RibuloseP-bd_barrel"/>
</dbReference>
<dbReference type="PANTHER" id="PTHR22854:SF2">
    <property type="entry name" value="INDOLE-3-GLYCEROL-PHOSPHATE SYNTHASE"/>
    <property type="match status" value="1"/>
</dbReference>
<dbReference type="PANTHER" id="PTHR22854">
    <property type="entry name" value="TRYPTOPHAN BIOSYNTHESIS PROTEIN"/>
    <property type="match status" value="1"/>
</dbReference>
<dbReference type="Pfam" id="PF00218">
    <property type="entry name" value="IGPS"/>
    <property type="match status" value="1"/>
</dbReference>
<dbReference type="SUPFAM" id="SSF51366">
    <property type="entry name" value="Ribulose-phoshate binding barrel"/>
    <property type="match status" value="1"/>
</dbReference>
<dbReference type="PROSITE" id="PS00614">
    <property type="entry name" value="IGPS"/>
    <property type="match status" value="1"/>
</dbReference>
<keyword id="KW-0028">Amino-acid biosynthesis</keyword>
<keyword id="KW-0057">Aromatic amino acid biosynthesis</keyword>
<keyword id="KW-0210">Decarboxylase</keyword>
<keyword id="KW-0456">Lyase</keyword>
<keyword id="KW-1185">Reference proteome</keyword>
<keyword id="KW-0822">Tryptophan biosynthesis</keyword>
<sequence>MKVLDEIVANRKKMVEIEKRKDIIKNLRSFIDELDIDVEKKRKLRLSKAIKKAKEIKNPIITEIKPSSPSKGSIREINLEDVKNIANEMVEGGATALSILTEPKYFNGSYKNLIVAREFDIPILMKDFIVDFYQIDVASEIGANAVLLIVSSLKEDIGEFLDYAKENDLECLVETHSEDEIDIALDAGAKIIGINNRDLKTLKIDLSTTEKLAPLIPKNKIKVGESGIYTKEQLNYVLKFTDAALIGSSIMESENIREKVREFVIK</sequence>
<protein>
    <recommendedName>
        <fullName>Indole-3-glycerol phosphate synthase</fullName>
        <shortName>IGPS</shortName>
        <ecNumber>4.1.1.48</ecNumber>
    </recommendedName>
</protein>
<accession>Q58328</accession>
<name>TRPC_METJA</name>
<feature type="chain" id="PRO_0000154292" description="Indole-3-glycerol phosphate synthase">
    <location>
        <begin position="1"/>
        <end position="266"/>
    </location>
</feature>
<proteinExistence type="inferred from homology"/>